<proteinExistence type="evidence at protein level"/>
<protein>
    <recommendedName>
        <fullName>Nitric oxide reductase subunit B</fullName>
        <ecNumber>1.7.2.5</ecNumber>
    </recommendedName>
    <alternativeName>
        <fullName>NOR large subunit</fullName>
    </alternativeName>
    <alternativeName>
        <fullName>Nitric oxide reductase cytochrome b subunit</fullName>
    </alternativeName>
</protein>
<dbReference type="EC" id="1.7.2.5"/>
<dbReference type="EMBL" id="X53676">
    <property type="protein sequence ID" value="CAA82229.1"/>
    <property type="molecule type" value="Genomic_DNA"/>
</dbReference>
<dbReference type="PIR" id="S41117">
    <property type="entry name" value="S41117"/>
</dbReference>
<dbReference type="RefSeq" id="WP_003279682.1">
    <property type="nucleotide sequence ID" value="NZ_CP036186.1"/>
</dbReference>
<dbReference type="SMR" id="P98008"/>
<dbReference type="TCDB" id="3.D.4.10.2">
    <property type="family name" value="the proton-translocating cytochrome oxidase (cox) superfamily"/>
</dbReference>
<dbReference type="eggNOG" id="COG3256">
    <property type="taxonomic scope" value="Bacteria"/>
</dbReference>
<dbReference type="BioCyc" id="MetaCyc:MONOMER-241"/>
<dbReference type="UniPathway" id="UPA00652">
    <property type="reaction ID" value="UER00708"/>
</dbReference>
<dbReference type="GO" id="GO:0005886">
    <property type="term" value="C:plasma membrane"/>
    <property type="evidence" value="ECO:0007669"/>
    <property type="project" value="UniProtKB-SubCell"/>
</dbReference>
<dbReference type="GO" id="GO:0004129">
    <property type="term" value="F:cytochrome-c oxidase activity"/>
    <property type="evidence" value="ECO:0007669"/>
    <property type="project" value="InterPro"/>
</dbReference>
<dbReference type="GO" id="GO:0020037">
    <property type="term" value="F:heme binding"/>
    <property type="evidence" value="ECO:0007669"/>
    <property type="project" value="InterPro"/>
</dbReference>
<dbReference type="GO" id="GO:0046872">
    <property type="term" value="F:metal ion binding"/>
    <property type="evidence" value="ECO:0007669"/>
    <property type="project" value="UniProtKB-KW"/>
</dbReference>
<dbReference type="GO" id="GO:0016966">
    <property type="term" value="F:nitric oxide reductase activity"/>
    <property type="evidence" value="ECO:0000315"/>
    <property type="project" value="CACAO"/>
</dbReference>
<dbReference type="GO" id="GO:0009060">
    <property type="term" value="P:aerobic respiration"/>
    <property type="evidence" value="ECO:0007669"/>
    <property type="project" value="InterPro"/>
</dbReference>
<dbReference type="GO" id="GO:0019333">
    <property type="term" value="P:denitrification pathway"/>
    <property type="evidence" value="ECO:0007669"/>
    <property type="project" value="UniProtKB-UniPathway"/>
</dbReference>
<dbReference type="GO" id="GO:0015990">
    <property type="term" value="P:electron transport coupled proton transport"/>
    <property type="evidence" value="ECO:0007669"/>
    <property type="project" value="TreeGrafter"/>
</dbReference>
<dbReference type="GO" id="GO:0022904">
    <property type="term" value="P:respiratory electron transport chain"/>
    <property type="evidence" value="ECO:0007669"/>
    <property type="project" value="TreeGrafter"/>
</dbReference>
<dbReference type="FunFam" id="1.20.210.10:FF:000010">
    <property type="entry name" value="Nitric oxide reductase subunit B"/>
    <property type="match status" value="1"/>
</dbReference>
<dbReference type="Gene3D" id="1.20.210.10">
    <property type="entry name" value="Cytochrome c oxidase-like, subunit I domain"/>
    <property type="match status" value="1"/>
</dbReference>
<dbReference type="InterPro" id="IPR023616">
    <property type="entry name" value="Cyt_c_oxase-like_su1_dom"/>
</dbReference>
<dbReference type="InterPro" id="IPR036927">
    <property type="entry name" value="Cyt_c_oxase-like_su1_sf"/>
</dbReference>
<dbReference type="InterPro" id="IPR000883">
    <property type="entry name" value="Cyt_C_Oxase_1"/>
</dbReference>
<dbReference type="InterPro" id="IPR023615">
    <property type="entry name" value="Cyt_c_Oxase_su1_BS"/>
</dbReference>
<dbReference type="PANTHER" id="PTHR10422">
    <property type="entry name" value="CYTOCHROME C OXIDASE SUBUNIT 1"/>
    <property type="match status" value="1"/>
</dbReference>
<dbReference type="PANTHER" id="PTHR10422:SF43">
    <property type="entry name" value="NITRIC OXIDE REDUCTASE SUBUNIT B"/>
    <property type="match status" value="1"/>
</dbReference>
<dbReference type="Pfam" id="PF00115">
    <property type="entry name" value="COX1"/>
    <property type="match status" value="1"/>
</dbReference>
<dbReference type="SUPFAM" id="SSF81442">
    <property type="entry name" value="Cytochrome c oxidase subunit I-like"/>
    <property type="match status" value="1"/>
</dbReference>
<dbReference type="PROSITE" id="PS50855">
    <property type="entry name" value="COX1"/>
    <property type="match status" value="1"/>
</dbReference>
<dbReference type="PROSITE" id="PS00077">
    <property type="entry name" value="COX1_CUB"/>
    <property type="match status" value="1"/>
</dbReference>
<name>NORB_STUST</name>
<organism>
    <name type="scientific">Stutzerimonas stutzeri</name>
    <name type="common">Pseudomonas stutzeri</name>
    <dbReference type="NCBI Taxonomy" id="316"/>
    <lineage>
        <taxon>Bacteria</taxon>
        <taxon>Pseudomonadati</taxon>
        <taxon>Pseudomonadota</taxon>
        <taxon>Gammaproteobacteria</taxon>
        <taxon>Pseudomonadales</taxon>
        <taxon>Pseudomonadaceae</taxon>
        <taxon>Stutzerimonas</taxon>
    </lineage>
</organism>
<comment type="function">
    <text>Component of the anaerobic respiratory chain that transforms nitrate to dinitrogen (denitrification). NorB is the catalytic subunit of the enzyme complex. Shows proton pump activity across the membrane in denitrifying bacterial cells. The mononitrogen reduction is probably coupled to electron transport phosphorylation.</text>
</comment>
<comment type="catalytic activity">
    <reaction evidence="2">
        <text>nitrous oxide + 2 Fe(III)-[cytochrome c] + H2O = 2 nitric oxide + 2 Fe(II)-[cytochrome c] + 2 H(+)</text>
        <dbReference type="Rhea" id="RHEA:30211"/>
        <dbReference type="Rhea" id="RHEA-COMP:10350"/>
        <dbReference type="Rhea" id="RHEA-COMP:14399"/>
        <dbReference type="ChEBI" id="CHEBI:15377"/>
        <dbReference type="ChEBI" id="CHEBI:15378"/>
        <dbReference type="ChEBI" id="CHEBI:16480"/>
        <dbReference type="ChEBI" id="CHEBI:17045"/>
        <dbReference type="ChEBI" id="CHEBI:29033"/>
        <dbReference type="ChEBI" id="CHEBI:29034"/>
        <dbReference type="EC" id="1.7.2.5"/>
    </reaction>
</comment>
<comment type="pathway">
    <text>Nitrogen metabolism; nitrate reduction (denitrification); dinitrogen from nitrate: step 3/4.</text>
</comment>
<comment type="subunit">
    <text>Heterodimer of cytochromes b (large subunit) and c (small subunit).</text>
</comment>
<comment type="subcellular location">
    <subcellularLocation>
        <location evidence="4">Cell membrane</location>
        <topology evidence="4">Multi-pass membrane protein</topology>
    </subcellularLocation>
</comment>
<comment type="induction">
    <text evidence="4">By nitric oxide.</text>
</comment>
<comment type="similarity">
    <text evidence="4">Belongs to the heme-copper respiratory oxidase family.</text>
</comment>
<sequence length="474" mass="53137">MSSFNPHLKFQSQAVAKPYFVFALILFVGQVLFGLIMGLQYVVGDFLFPLLPFNVARMVHTNLLIVWLLFGFMGAAYYLIPEESDCELHSPKLAIILFWVFAAAGVLTILGYLFVPYAALAEMTRNDLLPTMGREFLEQPTITKIGIVVVALGFLYNIGMTMLKGRKTVVSTVMMTGLIGLAVFFLFAFYNPENLSRDKFYWWFVVHLWVEGVWELIMGAMLAFVLIKVTGVDREVIEKWLYVIIAMALITGIIGTGHHFFWIGAPTVWLWVGSIFSALEPLPFFAMVLFALNMVNRRRREHPNKAASLWAIGTTVTAFLGAGVWGFMHTLAPVNYYTHGSQLTAAHGHLAFYGAYAMIVMTMISYAMPRLRGLGEAPDARAQRIEVWGFWLMTISMIAITLFLTAAGVVQIWLQRIPADGAAMSFMNTADQLAIFFWLRFIAGVFFLIGLVCYLYSFRQRGRVPVVVAAPAAA</sequence>
<reference key="1">
    <citation type="journal article" date="1994" name="Eur. J. Biochem.">
        <title>Nitric oxide reductase from Pseudomonas stutzeri. Primary structure and gene organization of a novel bacterial cytochrome bc complex.</title>
        <authorList>
            <person name="Zumft W.G."/>
            <person name="Braun C."/>
            <person name="Cuypers H."/>
        </authorList>
    </citation>
    <scope>NUCLEOTIDE SEQUENCE [GENOMIC DNA]</scope>
    <scope>PROTEIN SEQUENCE OF 2-16</scope>
    <source>
        <strain>ATCC 14405 / JCM 20778 / CIP 107696 / IAM 12931 / LMG 2243 / NCIMB 568 / Baumann 218 / ZoBell 632</strain>
    </source>
</reference>
<reference key="2">
    <citation type="journal article" date="1989" name="J. Bacteriol.">
        <title>Formation of the N-N bond from nitric oxide by a membrane-bound cytochrome bc complex of nitrate-respiring (denitrifying) Pseudomonas stutzeri.</title>
        <authorList>
            <person name="Heiss B."/>
            <person name="Frunzke K."/>
            <person name="Zumft W.G."/>
        </authorList>
    </citation>
    <scope>EPR SPECTROSCOPY</scope>
    <scope>CATALYTIC ACTIVITY</scope>
    <source>
        <strain>ATCC 14405 / JCM 20778 / CIP 107696 / IAM 12931 / LMG 2243 / NCIMB 568 / Baumann 218 / ZoBell 632</strain>
    </source>
</reference>
<reference key="3">
    <citation type="journal article" date="1998" name="Biochemistry">
        <title>The MCD and EPR of the heme centers of nitric oxide reductase from Pseudomonas stutzeri: evidence that the enzyme is structurally related to the heme-copper oxidases.</title>
        <authorList>
            <person name="Cheesman M.R."/>
            <person name="Zumft W.G."/>
            <person name="Thomson A.J."/>
        </authorList>
    </citation>
    <scope>EPR SPECTROSCOPY</scope>
    <source>
        <strain>ATCC 14405 / JCM 20778 / CIP 107696 / IAM 12931 / LMG 2243 / NCIMB 568 / Baumann 218 / ZoBell 632</strain>
    </source>
</reference>
<evidence type="ECO:0000255" key="1"/>
<evidence type="ECO:0000269" key="2">
    <source>
    </source>
</evidence>
<evidence type="ECO:0000269" key="3">
    <source>
    </source>
</evidence>
<evidence type="ECO:0000305" key="4"/>
<gene>
    <name type="primary">norB</name>
</gene>
<feature type="initiator methionine" description="Removed" evidence="3">
    <location>
        <position position="1"/>
    </location>
</feature>
<feature type="chain" id="PRO_0000183473" description="Nitric oxide reductase subunit B">
    <location>
        <begin position="2"/>
        <end position="474"/>
    </location>
</feature>
<feature type="transmembrane region" description="Helical" evidence="1">
    <location>
        <begin position="19"/>
        <end position="39"/>
    </location>
</feature>
<feature type="transmembrane region" description="Helical" evidence="1">
    <location>
        <begin position="61"/>
        <end position="81"/>
    </location>
</feature>
<feature type="transmembrane region" description="Helical" evidence="1">
    <location>
        <begin position="95"/>
        <end position="115"/>
    </location>
</feature>
<feature type="transmembrane region" description="Helical" evidence="1">
    <location>
        <begin position="145"/>
        <end position="165"/>
    </location>
</feature>
<feature type="transmembrane region" description="Helical" evidence="1">
    <location>
        <begin position="169"/>
        <end position="189"/>
    </location>
</feature>
<feature type="transmembrane region" description="Helical" evidence="1">
    <location>
        <begin position="207"/>
        <end position="227"/>
    </location>
</feature>
<feature type="transmembrane region" description="Helical" evidence="1">
    <location>
        <begin position="243"/>
        <end position="263"/>
    </location>
</feature>
<feature type="transmembrane region" description="Helical" evidence="1">
    <location>
        <begin position="270"/>
        <end position="290"/>
    </location>
</feature>
<feature type="transmembrane region" description="Helical" evidence="1">
    <location>
        <begin position="308"/>
        <end position="328"/>
    </location>
</feature>
<feature type="transmembrane region" description="Helical" evidence="1">
    <location>
        <begin position="348"/>
        <end position="368"/>
    </location>
</feature>
<feature type="transmembrane region" description="Helical" evidence="1">
    <location>
        <begin position="390"/>
        <end position="410"/>
    </location>
</feature>
<feature type="transmembrane region" description="Helical" evidence="1">
    <location>
        <begin position="433"/>
        <end position="453"/>
    </location>
</feature>
<feature type="binding site" description="axial binding residue" evidence="4">
    <location>
        <position position="60"/>
    </location>
    <ligand>
        <name>heme b</name>
        <dbReference type="ChEBI" id="CHEBI:60344"/>
        <label>1; low-spin</label>
    </ligand>
    <ligandPart>
        <name>Fe</name>
        <dbReference type="ChEBI" id="CHEBI:18248"/>
    </ligandPart>
</feature>
<feature type="binding site" evidence="4">
    <location>
        <position position="207"/>
    </location>
    <ligand>
        <name>Fe cation</name>
        <dbReference type="ChEBI" id="CHEBI:24875"/>
        <label>B</label>
    </ligand>
</feature>
<feature type="binding site" evidence="4">
    <location>
        <position position="258"/>
    </location>
    <ligand>
        <name>Fe cation</name>
        <dbReference type="ChEBI" id="CHEBI:24875"/>
        <label>B</label>
    </ligand>
</feature>
<feature type="binding site" evidence="4">
    <location>
        <position position="259"/>
    </location>
    <ligand>
        <name>Fe cation</name>
        <dbReference type="ChEBI" id="CHEBI:24875"/>
        <label>B</label>
    </ligand>
</feature>
<feature type="binding site" description="axial binding residue" evidence="4">
    <location>
        <position position="347"/>
    </location>
    <ligand>
        <name>heme b</name>
        <dbReference type="ChEBI" id="CHEBI:60344"/>
        <label>2; high-spin</label>
    </ligand>
    <ligandPart>
        <name>Fe</name>
        <dbReference type="ChEBI" id="CHEBI:18248"/>
    </ligandPart>
</feature>
<feature type="binding site" description="axial binding residue" evidence="4">
    <location>
        <position position="349"/>
    </location>
    <ligand>
        <name>heme b</name>
        <dbReference type="ChEBI" id="CHEBI:60344"/>
        <label>1; low-spin</label>
    </ligand>
    <ligandPart>
        <name>Fe</name>
        <dbReference type="ChEBI" id="CHEBI:18248"/>
    </ligandPart>
</feature>
<accession>P98008</accession>
<keyword id="KW-1003">Cell membrane</keyword>
<keyword id="KW-0903">Direct protein sequencing</keyword>
<keyword id="KW-0249">Electron transport</keyword>
<keyword id="KW-0349">Heme</keyword>
<keyword id="KW-0408">Iron</keyword>
<keyword id="KW-0472">Membrane</keyword>
<keyword id="KW-0479">Metal-binding</keyword>
<keyword id="KW-0560">Oxidoreductase</keyword>
<keyword id="KW-0679">Respiratory chain</keyword>
<keyword id="KW-0812">Transmembrane</keyword>
<keyword id="KW-1133">Transmembrane helix</keyword>
<keyword id="KW-0813">Transport</keyword>